<proteinExistence type="inferred from homology"/>
<sequence length="242" mass="27312">MRCFKATIAYDGAYFLGYAKQPNKLGVQDKIEDALNALGIKSVVIAAGRTDKGVHANNQVLSFHAPKHWNAAKLFYYLAPKLAPHIVLKKLEEKNFHARFDAQKRAYRYLLTKNLKTPFLAPYIACGDYGSLDALNTALKQFTGKHDFSMFKKEGGATTNPKRTIFNAFAYKTFIIGHECVVFKIIGDAFLRSSVRLIIQACVQYSLEKITLAEIQAQIHNLKATIRTPIMANGLYLHRVYY</sequence>
<comment type="function">
    <text evidence="1">Formation of pseudouridine at positions 38, 39 and 40 in the anticodon stem and loop of transfer RNAs.</text>
</comment>
<comment type="catalytic activity">
    <reaction evidence="1">
        <text>uridine(38/39/40) in tRNA = pseudouridine(38/39/40) in tRNA</text>
        <dbReference type="Rhea" id="RHEA:22376"/>
        <dbReference type="Rhea" id="RHEA-COMP:10085"/>
        <dbReference type="Rhea" id="RHEA-COMP:10087"/>
        <dbReference type="ChEBI" id="CHEBI:65314"/>
        <dbReference type="ChEBI" id="CHEBI:65315"/>
        <dbReference type="EC" id="5.4.99.12"/>
    </reaction>
</comment>
<comment type="subunit">
    <text evidence="1">Homodimer.</text>
</comment>
<comment type="similarity">
    <text evidence="1">Belongs to the tRNA pseudouridine synthase TruA family.</text>
</comment>
<gene>
    <name evidence="1" type="primary">truA</name>
    <name type="synonym">hisT</name>
    <name type="ordered locus">HP_0361</name>
</gene>
<protein>
    <recommendedName>
        <fullName evidence="1">tRNA pseudouridine synthase A</fullName>
        <ecNumber evidence="1">5.4.99.12</ecNumber>
    </recommendedName>
    <alternativeName>
        <fullName evidence="1">tRNA pseudouridine(38-40) synthase</fullName>
    </alternativeName>
    <alternativeName>
        <fullName evidence="1">tRNA pseudouridylate synthase I</fullName>
    </alternativeName>
    <alternativeName>
        <fullName evidence="1">tRNA-uridine isomerase I</fullName>
    </alternativeName>
</protein>
<dbReference type="EC" id="5.4.99.12" evidence="1"/>
<dbReference type="EMBL" id="AE000511">
    <property type="protein sequence ID" value="AAD07429.1"/>
    <property type="molecule type" value="Genomic_DNA"/>
</dbReference>
<dbReference type="PIR" id="A64565">
    <property type="entry name" value="A64565"/>
</dbReference>
<dbReference type="RefSeq" id="NP_207159.1">
    <property type="nucleotide sequence ID" value="NC_000915.1"/>
</dbReference>
<dbReference type="RefSeq" id="WP_001203260.1">
    <property type="nucleotide sequence ID" value="NC_018939.1"/>
</dbReference>
<dbReference type="SMR" id="P56144"/>
<dbReference type="FunCoup" id="P56144">
    <property type="interactions" value="326"/>
</dbReference>
<dbReference type="IntAct" id="P56144">
    <property type="interactions" value="3"/>
</dbReference>
<dbReference type="STRING" id="85962.HP_0361"/>
<dbReference type="PaxDb" id="85962-C694_01830"/>
<dbReference type="EnsemblBacteria" id="AAD07429">
    <property type="protein sequence ID" value="AAD07429"/>
    <property type="gene ID" value="HP_0361"/>
</dbReference>
<dbReference type="KEGG" id="heo:C694_01830"/>
<dbReference type="KEGG" id="hpy:HP_0361"/>
<dbReference type="PATRIC" id="fig|85962.47.peg.384"/>
<dbReference type="eggNOG" id="COG0101">
    <property type="taxonomic scope" value="Bacteria"/>
</dbReference>
<dbReference type="InParanoid" id="P56144"/>
<dbReference type="OrthoDB" id="9811823at2"/>
<dbReference type="PhylomeDB" id="P56144"/>
<dbReference type="Proteomes" id="UP000000429">
    <property type="component" value="Chromosome"/>
</dbReference>
<dbReference type="GO" id="GO:0009982">
    <property type="term" value="F:pseudouridine synthase activity"/>
    <property type="evidence" value="ECO:0000318"/>
    <property type="project" value="GO_Central"/>
</dbReference>
<dbReference type="GO" id="GO:0003723">
    <property type="term" value="F:RNA binding"/>
    <property type="evidence" value="ECO:0007669"/>
    <property type="project" value="InterPro"/>
</dbReference>
<dbReference type="GO" id="GO:0160147">
    <property type="term" value="F:tRNA pseudouridine(38-40) synthase activity"/>
    <property type="evidence" value="ECO:0007669"/>
    <property type="project" value="UniProtKB-EC"/>
</dbReference>
<dbReference type="GO" id="GO:0031119">
    <property type="term" value="P:tRNA pseudouridine synthesis"/>
    <property type="evidence" value="ECO:0000318"/>
    <property type="project" value="GO_Central"/>
</dbReference>
<dbReference type="CDD" id="cd02570">
    <property type="entry name" value="PseudoU_synth_EcTruA"/>
    <property type="match status" value="1"/>
</dbReference>
<dbReference type="FunFam" id="3.30.70.580:FF:000023">
    <property type="entry name" value="tRNA pseudouridine synthase A"/>
    <property type="match status" value="1"/>
</dbReference>
<dbReference type="FunFam" id="3.30.70.660:FF:000029">
    <property type="entry name" value="tRNA pseudouridine synthase A"/>
    <property type="match status" value="1"/>
</dbReference>
<dbReference type="Gene3D" id="3.30.70.660">
    <property type="entry name" value="Pseudouridine synthase I, catalytic domain, C-terminal subdomain"/>
    <property type="match status" value="1"/>
</dbReference>
<dbReference type="Gene3D" id="3.30.70.580">
    <property type="entry name" value="Pseudouridine synthase I, catalytic domain, N-terminal subdomain"/>
    <property type="match status" value="1"/>
</dbReference>
<dbReference type="HAMAP" id="MF_00171">
    <property type="entry name" value="TruA"/>
    <property type="match status" value="1"/>
</dbReference>
<dbReference type="InterPro" id="IPR020103">
    <property type="entry name" value="PsdUridine_synth_cat_dom_sf"/>
</dbReference>
<dbReference type="InterPro" id="IPR001406">
    <property type="entry name" value="PsdUridine_synth_TruA"/>
</dbReference>
<dbReference type="InterPro" id="IPR020097">
    <property type="entry name" value="PsdUridine_synth_TruA_a/b_dom"/>
</dbReference>
<dbReference type="InterPro" id="IPR020095">
    <property type="entry name" value="PsdUridine_synth_TruA_C"/>
</dbReference>
<dbReference type="InterPro" id="IPR020094">
    <property type="entry name" value="TruA/RsuA/RluB/E/F_N"/>
</dbReference>
<dbReference type="NCBIfam" id="TIGR00071">
    <property type="entry name" value="hisT_truA"/>
    <property type="match status" value="1"/>
</dbReference>
<dbReference type="PANTHER" id="PTHR11142">
    <property type="entry name" value="PSEUDOURIDYLATE SYNTHASE"/>
    <property type="match status" value="1"/>
</dbReference>
<dbReference type="PANTHER" id="PTHR11142:SF0">
    <property type="entry name" value="TRNA PSEUDOURIDINE SYNTHASE-LIKE 1"/>
    <property type="match status" value="1"/>
</dbReference>
<dbReference type="Pfam" id="PF01416">
    <property type="entry name" value="PseudoU_synth_1"/>
    <property type="match status" value="2"/>
</dbReference>
<dbReference type="PIRSF" id="PIRSF001430">
    <property type="entry name" value="tRNA_psdUrid_synth"/>
    <property type="match status" value="1"/>
</dbReference>
<dbReference type="SUPFAM" id="SSF55120">
    <property type="entry name" value="Pseudouridine synthase"/>
    <property type="match status" value="1"/>
</dbReference>
<reference key="1">
    <citation type="journal article" date="1997" name="Nature">
        <title>The complete genome sequence of the gastric pathogen Helicobacter pylori.</title>
        <authorList>
            <person name="Tomb J.-F."/>
            <person name="White O."/>
            <person name="Kerlavage A.R."/>
            <person name="Clayton R.A."/>
            <person name="Sutton G.G."/>
            <person name="Fleischmann R.D."/>
            <person name="Ketchum K.A."/>
            <person name="Klenk H.-P."/>
            <person name="Gill S.R."/>
            <person name="Dougherty B.A."/>
            <person name="Nelson K.E."/>
            <person name="Quackenbush J."/>
            <person name="Zhou L."/>
            <person name="Kirkness E.F."/>
            <person name="Peterson S.N."/>
            <person name="Loftus B.J."/>
            <person name="Richardson D.L."/>
            <person name="Dodson R.J."/>
            <person name="Khalak H.G."/>
            <person name="Glodek A."/>
            <person name="McKenney K."/>
            <person name="FitzGerald L.M."/>
            <person name="Lee N."/>
            <person name="Adams M.D."/>
            <person name="Hickey E.K."/>
            <person name="Berg D.E."/>
            <person name="Gocayne J.D."/>
            <person name="Utterback T.R."/>
            <person name="Peterson J.D."/>
            <person name="Kelley J.M."/>
            <person name="Cotton M.D."/>
            <person name="Weidman J.F."/>
            <person name="Fujii C."/>
            <person name="Bowman C."/>
            <person name="Watthey L."/>
            <person name="Wallin E."/>
            <person name="Hayes W.S."/>
            <person name="Borodovsky M."/>
            <person name="Karp P.D."/>
            <person name="Smith H.O."/>
            <person name="Fraser C.M."/>
            <person name="Venter J.C."/>
        </authorList>
    </citation>
    <scope>NUCLEOTIDE SEQUENCE [LARGE SCALE GENOMIC DNA]</scope>
    <source>
        <strain>ATCC 700392 / 26695</strain>
    </source>
</reference>
<keyword id="KW-0413">Isomerase</keyword>
<keyword id="KW-1185">Reference proteome</keyword>
<keyword id="KW-0819">tRNA processing</keyword>
<accession>P56144</accession>
<organism>
    <name type="scientific">Helicobacter pylori (strain ATCC 700392 / 26695)</name>
    <name type="common">Campylobacter pylori</name>
    <dbReference type="NCBI Taxonomy" id="85962"/>
    <lineage>
        <taxon>Bacteria</taxon>
        <taxon>Pseudomonadati</taxon>
        <taxon>Campylobacterota</taxon>
        <taxon>Epsilonproteobacteria</taxon>
        <taxon>Campylobacterales</taxon>
        <taxon>Helicobacteraceae</taxon>
        <taxon>Helicobacter</taxon>
    </lineage>
</organism>
<feature type="chain" id="PRO_0000057390" description="tRNA pseudouridine synthase A">
    <location>
        <begin position="1"/>
        <end position="242"/>
    </location>
</feature>
<feature type="active site" description="Nucleophile" evidence="1">
    <location>
        <position position="51"/>
    </location>
</feature>
<feature type="binding site" evidence="1">
    <location>
        <position position="107"/>
    </location>
    <ligand>
        <name>substrate</name>
    </ligand>
</feature>
<name>TRUA_HELPY</name>
<evidence type="ECO:0000255" key="1">
    <source>
        <dbReference type="HAMAP-Rule" id="MF_00171"/>
    </source>
</evidence>